<gene>
    <name type="primary">aplnr</name>
    <name type="synonym">agtrl1</name>
</gene>
<dbReference type="EMBL" id="BC096504">
    <property type="protein sequence ID" value="AAH96504.1"/>
    <property type="molecule type" value="mRNA"/>
</dbReference>
<dbReference type="RefSeq" id="NP_001027492.1">
    <property type="nucleotide sequence ID" value="NM_001032321.1"/>
</dbReference>
<dbReference type="SMR" id="Q4VA82"/>
<dbReference type="FunCoup" id="Q4VA82">
    <property type="interactions" value="961"/>
</dbReference>
<dbReference type="STRING" id="8364.ENSXETP00000034964"/>
<dbReference type="GlyCosmos" id="Q4VA82">
    <property type="glycosylation" value="2 sites, No reported glycans"/>
</dbReference>
<dbReference type="DNASU" id="613084"/>
<dbReference type="GeneID" id="613084"/>
<dbReference type="KEGG" id="xtr:613084"/>
<dbReference type="AGR" id="Xenbase:XB-GENE-6456077"/>
<dbReference type="CTD" id="187"/>
<dbReference type="Xenbase" id="XB-GENE-6456077">
    <property type="gene designation" value="aplnr"/>
</dbReference>
<dbReference type="InParanoid" id="Q4VA82"/>
<dbReference type="OMA" id="MYASIFC"/>
<dbReference type="OrthoDB" id="5974286at2759"/>
<dbReference type="Proteomes" id="UP000008143">
    <property type="component" value="Chromosome 1"/>
</dbReference>
<dbReference type="GO" id="GO:0005886">
    <property type="term" value="C:plasma membrane"/>
    <property type="evidence" value="ECO:0000250"/>
    <property type="project" value="UniProtKB"/>
</dbReference>
<dbReference type="GO" id="GO:0060182">
    <property type="term" value="F:apelin receptor activity"/>
    <property type="evidence" value="ECO:0000250"/>
    <property type="project" value="UniProtKB"/>
</dbReference>
<dbReference type="GO" id="GO:0008528">
    <property type="term" value="F:G protein-coupled peptide receptor activity"/>
    <property type="evidence" value="ECO:0000250"/>
    <property type="project" value="UniProtKB"/>
</dbReference>
<dbReference type="GO" id="GO:0140897">
    <property type="term" value="F:mechanoreceptor activity"/>
    <property type="evidence" value="ECO:0000250"/>
    <property type="project" value="UniProtKB"/>
</dbReference>
<dbReference type="GO" id="GO:0001525">
    <property type="term" value="P:angiogenesis"/>
    <property type="evidence" value="ECO:0007669"/>
    <property type="project" value="UniProtKB-KW"/>
</dbReference>
<dbReference type="GO" id="GO:0060183">
    <property type="term" value="P:apelin receptor signaling pathway"/>
    <property type="evidence" value="ECO:0000250"/>
    <property type="project" value="UniProtKB"/>
</dbReference>
<dbReference type="GO" id="GO:0060976">
    <property type="term" value="P:coronary vasculature development"/>
    <property type="evidence" value="ECO:0000250"/>
    <property type="project" value="UniProtKB"/>
</dbReference>
<dbReference type="GO" id="GO:0007186">
    <property type="term" value="P:G protein-coupled receptor signaling pathway"/>
    <property type="evidence" value="ECO:0000250"/>
    <property type="project" value="UniProtKB"/>
</dbReference>
<dbReference type="GO" id="GO:0007369">
    <property type="term" value="P:gastrulation"/>
    <property type="evidence" value="ECO:0007669"/>
    <property type="project" value="UniProtKB-KW"/>
</dbReference>
<dbReference type="GO" id="GO:0007507">
    <property type="term" value="P:heart development"/>
    <property type="evidence" value="ECO:0000250"/>
    <property type="project" value="UniProtKB"/>
</dbReference>
<dbReference type="GO" id="GO:0043951">
    <property type="term" value="P:negative regulation of cAMP-mediated signaling"/>
    <property type="evidence" value="ECO:0000250"/>
    <property type="project" value="UniProtKB"/>
</dbReference>
<dbReference type="GO" id="GO:0045766">
    <property type="term" value="P:positive regulation of angiogenesis"/>
    <property type="evidence" value="ECO:0000250"/>
    <property type="project" value="UniProtKB"/>
</dbReference>
<dbReference type="GO" id="GO:1903589">
    <property type="term" value="P:positive regulation of blood vessel endothelial cell proliferation involved in sprouting angiogenesis"/>
    <property type="evidence" value="ECO:0000250"/>
    <property type="project" value="UniProtKB"/>
</dbReference>
<dbReference type="GO" id="GO:0051281">
    <property type="term" value="P:positive regulation of release of sequestered calcium ion into cytosol"/>
    <property type="evidence" value="ECO:0000250"/>
    <property type="project" value="UniProtKB"/>
</dbReference>
<dbReference type="GO" id="GO:0001570">
    <property type="term" value="P:vasculogenesis"/>
    <property type="evidence" value="ECO:0000250"/>
    <property type="project" value="UniProtKB"/>
</dbReference>
<dbReference type="CDD" id="cd15190">
    <property type="entry name" value="7tmA_Apelin_R"/>
    <property type="match status" value="1"/>
</dbReference>
<dbReference type="FunFam" id="1.20.1070.10:FF:000106">
    <property type="entry name" value="Apelin receptor a"/>
    <property type="match status" value="1"/>
</dbReference>
<dbReference type="Gene3D" id="1.20.1070.10">
    <property type="entry name" value="Rhodopsin 7-helix transmembrane proteins"/>
    <property type="match status" value="1"/>
</dbReference>
<dbReference type="InterPro" id="IPR000248">
    <property type="entry name" value="ATII_rcpt"/>
</dbReference>
<dbReference type="InterPro" id="IPR050119">
    <property type="entry name" value="CCR1-9-like"/>
</dbReference>
<dbReference type="InterPro" id="IPR000276">
    <property type="entry name" value="GPCR_Rhodpsn"/>
</dbReference>
<dbReference type="InterPro" id="IPR017452">
    <property type="entry name" value="GPCR_Rhodpsn_7TM"/>
</dbReference>
<dbReference type="PANTHER" id="PTHR10489:SF953">
    <property type="entry name" value="APELIN RECEPTOR"/>
    <property type="match status" value="1"/>
</dbReference>
<dbReference type="PANTHER" id="PTHR10489">
    <property type="entry name" value="CELL ADHESION MOLECULE"/>
    <property type="match status" value="1"/>
</dbReference>
<dbReference type="Pfam" id="PF00001">
    <property type="entry name" value="7tm_1"/>
    <property type="match status" value="1"/>
</dbReference>
<dbReference type="PRINTS" id="PR00241">
    <property type="entry name" value="ANGIOTENSINR"/>
</dbReference>
<dbReference type="PRINTS" id="PR00237">
    <property type="entry name" value="GPCRRHODOPSN"/>
</dbReference>
<dbReference type="SUPFAM" id="SSF81321">
    <property type="entry name" value="Family A G protein-coupled receptor-like"/>
    <property type="match status" value="1"/>
</dbReference>
<dbReference type="PROSITE" id="PS00237">
    <property type="entry name" value="G_PROTEIN_RECEP_F1_1"/>
    <property type="match status" value="1"/>
</dbReference>
<dbReference type="PROSITE" id="PS50262">
    <property type="entry name" value="G_PROTEIN_RECEP_F1_2"/>
    <property type="match status" value="1"/>
</dbReference>
<feature type="chain" id="PRO_0000311702" description="Apelin receptor">
    <location>
        <begin position="1"/>
        <end position="364"/>
    </location>
</feature>
<feature type="topological domain" description="Extracellular" evidence="5">
    <location>
        <begin position="1"/>
        <end position="39"/>
    </location>
</feature>
<feature type="transmembrane region" description="Helical; Name=1" evidence="5">
    <location>
        <begin position="40"/>
        <end position="60"/>
    </location>
</feature>
<feature type="topological domain" description="Cytoplasmic" evidence="5">
    <location>
        <begin position="61"/>
        <end position="78"/>
    </location>
</feature>
<feature type="transmembrane region" description="Helical; Name=2" evidence="5">
    <location>
        <begin position="79"/>
        <end position="99"/>
    </location>
</feature>
<feature type="topological domain" description="Extracellular" evidence="5">
    <location>
        <begin position="100"/>
        <end position="112"/>
    </location>
</feature>
<feature type="transmembrane region" description="Helical; Name=3" evidence="5">
    <location>
        <begin position="113"/>
        <end position="133"/>
    </location>
</feature>
<feature type="topological domain" description="Cytoplasmic" evidence="5">
    <location>
        <begin position="134"/>
        <end position="153"/>
    </location>
</feature>
<feature type="transmembrane region" description="Helical; Name=4" evidence="5">
    <location>
        <begin position="154"/>
        <end position="174"/>
    </location>
</feature>
<feature type="topological domain" description="Extracellular" evidence="5">
    <location>
        <begin position="175"/>
        <end position="201"/>
    </location>
</feature>
<feature type="transmembrane region" description="Helical; Name=5" evidence="5">
    <location>
        <begin position="202"/>
        <end position="222"/>
    </location>
</feature>
<feature type="topological domain" description="Cytoplasmic" evidence="5">
    <location>
        <begin position="223"/>
        <end position="250"/>
    </location>
</feature>
<feature type="transmembrane region" description="Helical; Name=6" evidence="5">
    <location>
        <begin position="251"/>
        <end position="271"/>
    </location>
</feature>
<feature type="topological domain" description="Extracellular" evidence="5">
    <location>
        <begin position="272"/>
        <end position="298"/>
    </location>
</feature>
<feature type="transmembrane region" description="Helical; Name=7" evidence="5">
    <location>
        <begin position="299"/>
        <end position="319"/>
    </location>
</feature>
<feature type="topological domain" description="Cytoplasmic" evidence="5">
    <location>
        <begin position="320"/>
        <end position="364"/>
    </location>
</feature>
<feature type="glycosylation site" description="N-linked (GlcNAc...) asparagine" evidence="5">
    <location>
        <position position="21"/>
    </location>
</feature>
<feature type="glycosylation site" description="N-linked (GlcNAc...) asparagine" evidence="5">
    <location>
        <position position="183"/>
    </location>
</feature>
<feature type="disulfide bond" evidence="1">
    <location>
        <begin position="28"/>
        <end position="288"/>
    </location>
</feature>
<feature type="disulfide bond" evidence="1">
    <location>
        <begin position="110"/>
        <end position="187"/>
    </location>
</feature>
<accession>Q4VA82</accession>
<organism>
    <name type="scientific">Xenopus tropicalis</name>
    <name type="common">Western clawed frog</name>
    <name type="synonym">Silurana tropicalis</name>
    <dbReference type="NCBI Taxonomy" id="8364"/>
    <lineage>
        <taxon>Eukaryota</taxon>
        <taxon>Metazoa</taxon>
        <taxon>Chordata</taxon>
        <taxon>Craniata</taxon>
        <taxon>Vertebrata</taxon>
        <taxon>Euteleostomi</taxon>
        <taxon>Amphibia</taxon>
        <taxon>Batrachia</taxon>
        <taxon>Anura</taxon>
        <taxon>Pipoidea</taxon>
        <taxon>Pipidae</taxon>
        <taxon>Xenopodinae</taxon>
        <taxon>Xenopus</taxon>
        <taxon>Silurana</taxon>
    </lineage>
</organism>
<keyword id="KW-0037">Angiogenesis</keyword>
<keyword id="KW-1003">Cell membrane</keyword>
<keyword id="KW-0217">Developmental protein</keyword>
<keyword id="KW-0221">Differentiation</keyword>
<keyword id="KW-1015">Disulfide bond</keyword>
<keyword id="KW-0297">G-protein coupled receptor</keyword>
<keyword id="KW-0306">Gastrulation</keyword>
<keyword id="KW-0325">Glycoprotein</keyword>
<keyword id="KW-0472">Membrane</keyword>
<keyword id="KW-0675">Receptor</keyword>
<keyword id="KW-1185">Reference proteome</keyword>
<keyword id="KW-0807">Transducer</keyword>
<keyword id="KW-0812">Transmembrane</keyword>
<keyword id="KW-1133">Transmembrane helix</keyword>
<name>APJ_XENTR</name>
<sequence length="364" mass="40917">MATDEFSSSTTPSYDYYDYTNESGLPPCDETDWDLSYSLLPVFYMIVFVLGLSGNGVVIFTVWKAKPKRRSADTYIGNLALADLAFVVTLPLWATYTALGFHWPFGSALCKLSSYLVLLNMFASVFCLTCLSFDRYLAIVHSLSSAKLRSRSSILVSLAVIWLFSGLLALPSLILRDTRVEGNNTICDLDFSGVSSKENENFWIGGLSILTTVPGFLLPLLLMTIFYCFIGGKVTMHFQNLKKEEQKKKRLLKIIITLVVVFAICWLPFHILKTIHFLDLMGFLELSCSTQNIIVSLHPYATCLAYINSCLNPFLYAFFDLRFRSQCFFFFGFKKALQGHLSNTSSSLSAQTQKSEIHSLATKV</sequence>
<reference evidence="7" key="1">
    <citation type="submission" date="2005-05" db="EMBL/GenBank/DDBJ databases">
        <authorList>
            <consortium name="NIH - Xenopus Gene Collection (XGC) project"/>
        </authorList>
    </citation>
    <scope>NUCLEOTIDE SEQUENCE [LARGE SCALE MRNA]</scope>
    <source>
        <strain evidence="7">F6</strain>
    </source>
</reference>
<comment type="function">
    <text evidence="1 2 3 4">G protein-coupled receptor for peptide hormones apelin (apln) and apelin receptor early endogenous ligand (apela), that plays a role in the regulation of normal cardiovascular function and fluid homeostasis. When acting as apelin receptor, activates both G(i) protein pathway that inhibits adenylate cyclase activity, and the beta-arrestin pathway that promotes internalization of the receptor. Also functions as mechanoreceptor that is activated by pathological stimuli in a G-protein-independent fashion to induce beta-arrestin signaling, hence eliciting cardiac hypertrophy. However, the presence of apelin ligand blunts cardiac hypertrophic induction from APLNR/APJ on response to pathological stimuli. Plays a key role in early development such as gastrulation, blood vessels formation and heart morphogenesis by acting as a receptor for apela hormone, promoting endoderm and mesendoderm cell migration and regulating the migration of cells fated to become myocardial progenitors, respectively. Promotes angioblast migration toward the embryonic midline, i.e. the position of the future vessel formation, during vasculogenesis. May promote sinus venosus (SV)-derived endothelial cells migration into the developing heart to promote coronary blood vessel development. Required for cardiovascular development, particularly for intersomitic vein angiogenesis. Plays also a role in various processes in adults such as regulation of blood vessel formation, blood pressure, heart contractility, and heart failure. Acts upstream of the i/o type of G-alpha proteins in the differentiation of endothelium, erythroid cells, myeloid cells and cardiomyocytes.</text>
</comment>
<comment type="subcellular location">
    <subcellularLocation>
        <location evidence="2">Cell membrane</location>
        <topology evidence="2">Multi-pass membrane protein</topology>
    </subcellularLocation>
    <text evidence="1 2">Internalized to the cytoplasm after exposure to apelin (apln). After exposure to apelin receptor early endogenous ligand (apela), internalized from the cell surface into an endosomal recycling compartment, from where it is recycled to the cell membrane.</text>
</comment>
<comment type="similarity">
    <text evidence="6">Belongs to the G-protein coupled receptor 1 family.</text>
</comment>
<evidence type="ECO:0000250" key="1">
    <source>
        <dbReference type="UniProtKB" id="P35414"/>
    </source>
</evidence>
<evidence type="ECO:0000250" key="2">
    <source>
        <dbReference type="UniProtKB" id="P79960"/>
    </source>
</evidence>
<evidence type="ECO:0000250" key="3">
    <source>
        <dbReference type="UniProtKB" id="Q7SZP9"/>
    </source>
</evidence>
<evidence type="ECO:0000250" key="4">
    <source>
        <dbReference type="UniProtKB" id="Q9WV08"/>
    </source>
</evidence>
<evidence type="ECO:0000255" key="5"/>
<evidence type="ECO:0000255" key="6">
    <source>
        <dbReference type="PROSITE-ProRule" id="PRU00521"/>
    </source>
</evidence>
<evidence type="ECO:0000312" key="7">
    <source>
        <dbReference type="EMBL" id="AAH96504.1"/>
    </source>
</evidence>
<proteinExistence type="evidence at transcript level"/>
<protein>
    <recommendedName>
        <fullName>Apelin receptor</fullName>
    </recommendedName>
    <alternativeName>
        <fullName>Angiotensin receptor-like 1</fullName>
    </alternativeName>
    <alternativeName>
        <fullName>Angiotensin receptor-related protein</fullName>
    </alternativeName>
    <alternativeName>
        <fullName>G-protein coupled receptor APJ</fullName>
    </alternativeName>
</protein>